<organism>
    <name type="scientific">Mus musculus</name>
    <name type="common">Mouse</name>
    <dbReference type="NCBI Taxonomy" id="10090"/>
    <lineage>
        <taxon>Eukaryota</taxon>
        <taxon>Metazoa</taxon>
        <taxon>Chordata</taxon>
        <taxon>Craniata</taxon>
        <taxon>Vertebrata</taxon>
        <taxon>Euteleostomi</taxon>
        <taxon>Mammalia</taxon>
        <taxon>Eutheria</taxon>
        <taxon>Euarchontoglires</taxon>
        <taxon>Glires</taxon>
        <taxon>Rodentia</taxon>
        <taxon>Myomorpha</taxon>
        <taxon>Muroidea</taxon>
        <taxon>Muridae</taxon>
        <taxon>Murinae</taxon>
        <taxon>Mus</taxon>
        <taxon>Mus</taxon>
    </lineage>
</organism>
<name>AIF1L_MOUSE</name>
<proteinExistence type="evidence at protein level"/>
<dbReference type="EMBL" id="AB035322">
    <property type="protein sequence ID" value="BAB20749.1"/>
    <property type="molecule type" value="mRNA"/>
</dbReference>
<dbReference type="EMBL" id="AB094629">
    <property type="protein sequence ID" value="BAC55012.1"/>
    <property type="molecule type" value="Genomic_DNA"/>
</dbReference>
<dbReference type="EMBL" id="AK028955">
    <property type="protein sequence ID" value="BAC26211.1"/>
    <property type="molecule type" value="mRNA"/>
</dbReference>
<dbReference type="EMBL" id="AK045539">
    <property type="protein sequence ID" value="BAC32410.1"/>
    <property type="molecule type" value="mRNA"/>
</dbReference>
<dbReference type="EMBL" id="BC024599">
    <property type="protein sequence ID" value="AAH24599.1"/>
    <property type="molecule type" value="mRNA"/>
</dbReference>
<dbReference type="CCDS" id="CCDS15904.1"/>
<dbReference type="RefSeq" id="NP_660126.1">
    <property type="nucleotide sequence ID" value="NM_145144.1"/>
</dbReference>
<dbReference type="SMR" id="Q9EQX4"/>
<dbReference type="BioGRID" id="224458">
    <property type="interactions" value="7"/>
</dbReference>
<dbReference type="FunCoup" id="Q9EQX4">
    <property type="interactions" value="112"/>
</dbReference>
<dbReference type="IntAct" id="Q9EQX4">
    <property type="interactions" value="6"/>
</dbReference>
<dbReference type="STRING" id="10090.ENSMUSP00000001920"/>
<dbReference type="iPTMnet" id="Q9EQX4"/>
<dbReference type="PhosphoSitePlus" id="Q9EQX4"/>
<dbReference type="jPOST" id="Q9EQX4"/>
<dbReference type="PaxDb" id="10090-ENSMUSP00000001920"/>
<dbReference type="PeptideAtlas" id="Q9EQX4"/>
<dbReference type="ProteomicsDB" id="296342"/>
<dbReference type="Pumba" id="Q9EQX4"/>
<dbReference type="Antibodypedia" id="31561">
    <property type="antibodies" value="23 antibodies from 9 providers"/>
</dbReference>
<dbReference type="DNASU" id="108897"/>
<dbReference type="Ensembl" id="ENSMUST00000001920.13">
    <property type="protein sequence ID" value="ENSMUSP00000001920.8"/>
    <property type="gene ID" value="ENSMUSG00000001864.14"/>
</dbReference>
<dbReference type="GeneID" id="108897"/>
<dbReference type="KEGG" id="mmu:108897"/>
<dbReference type="UCSC" id="uc008jeg.1">
    <property type="organism name" value="mouse"/>
</dbReference>
<dbReference type="AGR" id="MGI:1919598"/>
<dbReference type="CTD" id="83543"/>
<dbReference type="MGI" id="MGI:1919598">
    <property type="gene designation" value="Aif1l"/>
</dbReference>
<dbReference type="VEuPathDB" id="HostDB:ENSMUSG00000001864"/>
<dbReference type="eggNOG" id="KOG0027">
    <property type="taxonomic scope" value="Eukaryota"/>
</dbReference>
<dbReference type="GeneTree" id="ENSGT00390000013846"/>
<dbReference type="HOGENOM" id="CLU_134149_0_0_1"/>
<dbReference type="InParanoid" id="Q9EQX4"/>
<dbReference type="OMA" id="MDFGMSV"/>
<dbReference type="OrthoDB" id="26525at2759"/>
<dbReference type="PhylomeDB" id="Q9EQX4"/>
<dbReference type="TreeFam" id="TF320736"/>
<dbReference type="BioGRID-ORCS" id="108897">
    <property type="hits" value="2 hits in 77 CRISPR screens"/>
</dbReference>
<dbReference type="PRO" id="PR:Q9EQX4"/>
<dbReference type="Proteomes" id="UP000000589">
    <property type="component" value="Chromosome 2"/>
</dbReference>
<dbReference type="RNAct" id="Q9EQX4">
    <property type="molecule type" value="protein"/>
</dbReference>
<dbReference type="Bgee" id="ENSMUSG00000001864">
    <property type="expression patterns" value="Expressed in decidua and 253 other cell types or tissues"/>
</dbReference>
<dbReference type="ExpressionAtlas" id="Q9EQX4">
    <property type="expression patterns" value="baseline and differential"/>
</dbReference>
<dbReference type="GO" id="GO:0005884">
    <property type="term" value="C:actin filament"/>
    <property type="evidence" value="ECO:0007669"/>
    <property type="project" value="Ensembl"/>
</dbReference>
<dbReference type="GO" id="GO:0005737">
    <property type="term" value="C:cytoplasm"/>
    <property type="evidence" value="ECO:0007669"/>
    <property type="project" value="UniProtKB-KW"/>
</dbReference>
<dbReference type="GO" id="GO:0005925">
    <property type="term" value="C:focal adhesion"/>
    <property type="evidence" value="ECO:0007669"/>
    <property type="project" value="Ensembl"/>
</dbReference>
<dbReference type="GO" id="GO:0032587">
    <property type="term" value="C:ruffle membrane"/>
    <property type="evidence" value="ECO:0007669"/>
    <property type="project" value="UniProtKB-SubCell"/>
</dbReference>
<dbReference type="GO" id="GO:0051015">
    <property type="term" value="F:actin filament binding"/>
    <property type="evidence" value="ECO:0000250"/>
    <property type="project" value="UniProtKB"/>
</dbReference>
<dbReference type="GO" id="GO:0005509">
    <property type="term" value="F:calcium ion binding"/>
    <property type="evidence" value="ECO:0007669"/>
    <property type="project" value="InterPro"/>
</dbReference>
<dbReference type="FunFam" id="1.10.238.10:FF:000106">
    <property type="entry name" value="Allograft inflammatory factor 1"/>
    <property type="match status" value="1"/>
</dbReference>
<dbReference type="Gene3D" id="1.10.238.10">
    <property type="entry name" value="EF-hand"/>
    <property type="match status" value="1"/>
</dbReference>
<dbReference type="InterPro" id="IPR049025">
    <property type="entry name" value="AIF-1_EF_pair"/>
</dbReference>
<dbReference type="InterPro" id="IPR042433">
    <property type="entry name" value="AIF1/AIF1L"/>
</dbReference>
<dbReference type="InterPro" id="IPR011992">
    <property type="entry name" value="EF-hand-dom_pair"/>
</dbReference>
<dbReference type="InterPro" id="IPR002048">
    <property type="entry name" value="EF_hand_dom"/>
</dbReference>
<dbReference type="PANTHER" id="PTHR10356:SF5">
    <property type="entry name" value="ALLOGRAFT INFLAMMATORY FACTOR 1-LIKE"/>
    <property type="match status" value="1"/>
</dbReference>
<dbReference type="PANTHER" id="PTHR10356">
    <property type="entry name" value="ALLOGRAFT INFLAMMATORY FACTOR-1"/>
    <property type="match status" value="1"/>
</dbReference>
<dbReference type="Pfam" id="PF21008">
    <property type="entry name" value="AIF-1"/>
    <property type="match status" value="1"/>
</dbReference>
<dbReference type="SUPFAM" id="SSF47473">
    <property type="entry name" value="EF-hand"/>
    <property type="match status" value="1"/>
</dbReference>
<dbReference type="PROSITE" id="PS50222">
    <property type="entry name" value="EF_HAND_2"/>
    <property type="match status" value="1"/>
</dbReference>
<evidence type="ECO:0000250" key="1"/>
<evidence type="ECO:0000250" key="2">
    <source>
        <dbReference type="UniProtKB" id="Q9BQI0"/>
    </source>
</evidence>
<evidence type="ECO:0000255" key="3">
    <source>
        <dbReference type="PROSITE-ProRule" id="PRU00448"/>
    </source>
</evidence>
<evidence type="ECO:0000256" key="4">
    <source>
        <dbReference type="SAM" id="MobiDB-lite"/>
    </source>
</evidence>
<evidence type="ECO:0000305" key="5"/>
<keyword id="KW-0007">Acetylation</keyword>
<keyword id="KW-0009">Actin-binding</keyword>
<keyword id="KW-0106">Calcium</keyword>
<keyword id="KW-1003">Cell membrane</keyword>
<keyword id="KW-0966">Cell projection</keyword>
<keyword id="KW-0963">Cytoplasm</keyword>
<keyword id="KW-0206">Cytoskeleton</keyword>
<keyword id="KW-0472">Membrane</keyword>
<keyword id="KW-0479">Metal-binding</keyword>
<keyword id="KW-0597">Phosphoprotein</keyword>
<keyword id="KW-1185">Reference proteome</keyword>
<keyword id="KW-0677">Repeat</keyword>
<feature type="initiator methionine" description="Removed" evidence="2">
    <location>
        <position position="1"/>
    </location>
</feature>
<feature type="chain" id="PRO_0000073871" description="Allograft inflammatory factor 1-like">
    <location>
        <begin position="2"/>
        <end position="150"/>
    </location>
</feature>
<feature type="domain" description="EF-hand 1" evidence="3">
    <location>
        <begin position="47"/>
        <end position="82"/>
    </location>
</feature>
<feature type="domain" description="EF-hand 2; degenerate" evidence="5">
    <location>
        <begin position="83"/>
        <end position="117"/>
    </location>
</feature>
<feature type="region of interest" description="Disordered" evidence="4">
    <location>
        <begin position="129"/>
        <end position="150"/>
    </location>
</feature>
<feature type="binding site" evidence="5">
    <location>
        <position position="60"/>
    </location>
    <ligand>
        <name>Ca(2+)</name>
        <dbReference type="ChEBI" id="CHEBI:29108"/>
    </ligand>
</feature>
<feature type="binding site" evidence="5">
    <location>
        <position position="62"/>
    </location>
    <ligand>
        <name>Ca(2+)</name>
        <dbReference type="ChEBI" id="CHEBI:29108"/>
    </ligand>
</feature>
<feature type="binding site" evidence="5">
    <location>
        <position position="64"/>
    </location>
    <ligand>
        <name>Ca(2+)</name>
        <dbReference type="ChEBI" id="CHEBI:29108"/>
    </ligand>
</feature>
<feature type="binding site" evidence="5">
    <location>
        <position position="66"/>
    </location>
    <ligand>
        <name>Ca(2+)</name>
        <dbReference type="ChEBI" id="CHEBI:29108"/>
    </ligand>
</feature>
<feature type="modified residue" description="N-acetylserine" evidence="2">
    <location>
        <position position="2"/>
    </location>
</feature>
<feature type="modified residue" description="Phosphoserine" evidence="2">
    <location>
        <position position="2"/>
    </location>
</feature>
<feature type="modified residue" description="Phosphoserine" evidence="2">
    <location>
        <position position="134"/>
    </location>
</feature>
<feature type="sequence conflict" description="In Ref. 3; BAC26211." evidence="5" ref="3">
    <original>M</original>
    <variation>K</variation>
    <location>
        <position position="111"/>
    </location>
</feature>
<reference key="1">
    <citation type="submission" date="1999-11" db="EMBL/GenBank/DDBJ databases">
        <title>Molecular cloning of mouse iba2 cDNA encoding a novel EF-hand calcium-binding protein.</title>
        <authorList>
            <person name="Imai Y."/>
            <person name="Kohsaka S."/>
        </authorList>
    </citation>
    <scope>NUCLEOTIDE SEQUENCE [MRNA]</scope>
    <source>
        <strain>BALB/cJ</strain>
        <tissue>Brain</tissue>
    </source>
</reference>
<reference key="2">
    <citation type="submission" date="2002-10" db="EMBL/GenBank/DDBJ databases">
        <title>Complete sequence of mouse iba2 gene.</title>
        <authorList>
            <person name="Imai Y."/>
            <person name="Kohsaka S."/>
        </authorList>
    </citation>
    <scope>NUCLEOTIDE SEQUENCE [GENOMIC DNA]</scope>
    <source>
        <strain>129/SvJ</strain>
    </source>
</reference>
<reference key="3">
    <citation type="journal article" date="2005" name="Science">
        <title>The transcriptional landscape of the mammalian genome.</title>
        <authorList>
            <person name="Carninci P."/>
            <person name="Kasukawa T."/>
            <person name="Katayama S."/>
            <person name="Gough J."/>
            <person name="Frith M.C."/>
            <person name="Maeda N."/>
            <person name="Oyama R."/>
            <person name="Ravasi T."/>
            <person name="Lenhard B."/>
            <person name="Wells C."/>
            <person name="Kodzius R."/>
            <person name="Shimokawa K."/>
            <person name="Bajic V.B."/>
            <person name="Brenner S.E."/>
            <person name="Batalov S."/>
            <person name="Forrest A.R."/>
            <person name="Zavolan M."/>
            <person name="Davis M.J."/>
            <person name="Wilming L.G."/>
            <person name="Aidinis V."/>
            <person name="Allen J.E."/>
            <person name="Ambesi-Impiombato A."/>
            <person name="Apweiler R."/>
            <person name="Aturaliya R.N."/>
            <person name="Bailey T.L."/>
            <person name="Bansal M."/>
            <person name="Baxter L."/>
            <person name="Beisel K.W."/>
            <person name="Bersano T."/>
            <person name="Bono H."/>
            <person name="Chalk A.M."/>
            <person name="Chiu K.P."/>
            <person name="Choudhary V."/>
            <person name="Christoffels A."/>
            <person name="Clutterbuck D.R."/>
            <person name="Crowe M.L."/>
            <person name="Dalla E."/>
            <person name="Dalrymple B.P."/>
            <person name="de Bono B."/>
            <person name="Della Gatta G."/>
            <person name="di Bernardo D."/>
            <person name="Down T."/>
            <person name="Engstrom P."/>
            <person name="Fagiolini M."/>
            <person name="Faulkner G."/>
            <person name="Fletcher C.F."/>
            <person name="Fukushima T."/>
            <person name="Furuno M."/>
            <person name="Futaki S."/>
            <person name="Gariboldi M."/>
            <person name="Georgii-Hemming P."/>
            <person name="Gingeras T.R."/>
            <person name="Gojobori T."/>
            <person name="Green R.E."/>
            <person name="Gustincich S."/>
            <person name="Harbers M."/>
            <person name="Hayashi Y."/>
            <person name="Hensch T.K."/>
            <person name="Hirokawa N."/>
            <person name="Hill D."/>
            <person name="Huminiecki L."/>
            <person name="Iacono M."/>
            <person name="Ikeo K."/>
            <person name="Iwama A."/>
            <person name="Ishikawa T."/>
            <person name="Jakt M."/>
            <person name="Kanapin A."/>
            <person name="Katoh M."/>
            <person name="Kawasawa Y."/>
            <person name="Kelso J."/>
            <person name="Kitamura H."/>
            <person name="Kitano H."/>
            <person name="Kollias G."/>
            <person name="Krishnan S.P."/>
            <person name="Kruger A."/>
            <person name="Kummerfeld S.K."/>
            <person name="Kurochkin I.V."/>
            <person name="Lareau L.F."/>
            <person name="Lazarevic D."/>
            <person name="Lipovich L."/>
            <person name="Liu J."/>
            <person name="Liuni S."/>
            <person name="McWilliam S."/>
            <person name="Madan Babu M."/>
            <person name="Madera M."/>
            <person name="Marchionni L."/>
            <person name="Matsuda H."/>
            <person name="Matsuzawa S."/>
            <person name="Miki H."/>
            <person name="Mignone F."/>
            <person name="Miyake S."/>
            <person name="Morris K."/>
            <person name="Mottagui-Tabar S."/>
            <person name="Mulder N."/>
            <person name="Nakano N."/>
            <person name="Nakauchi H."/>
            <person name="Ng P."/>
            <person name="Nilsson R."/>
            <person name="Nishiguchi S."/>
            <person name="Nishikawa S."/>
            <person name="Nori F."/>
            <person name="Ohara O."/>
            <person name="Okazaki Y."/>
            <person name="Orlando V."/>
            <person name="Pang K.C."/>
            <person name="Pavan W.J."/>
            <person name="Pavesi G."/>
            <person name="Pesole G."/>
            <person name="Petrovsky N."/>
            <person name="Piazza S."/>
            <person name="Reed J."/>
            <person name="Reid J.F."/>
            <person name="Ring B.Z."/>
            <person name="Ringwald M."/>
            <person name="Rost B."/>
            <person name="Ruan Y."/>
            <person name="Salzberg S.L."/>
            <person name="Sandelin A."/>
            <person name="Schneider C."/>
            <person name="Schoenbach C."/>
            <person name="Sekiguchi K."/>
            <person name="Semple C.A."/>
            <person name="Seno S."/>
            <person name="Sessa L."/>
            <person name="Sheng Y."/>
            <person name="Shibata Y."/>
            <person name="Shimada H."/>
            <person name="Shimada K."/>
            <person name="Silva D."/>
            <person name="Sinclair B."/>
            <person name="Sperling S."/>
            <person name="Stupka E."/>
            <person name="Sugiura K."/>
            <person name="Sultana R."/>
            <person name="Takenaka Y."/>
            <person name="Taki K."/>
            <person name="Tammoja K."/>
            <person name="Tan S.L."/>
            <person name="Tang S."/>
            <person name="Taylor M.S."/>
            <person name="Tegner J."/>
            <person name="Teichmann S.A."/>
            <person name="Ueda H.R."/>
            <person name="van Nimwegen E."/>
            <person name="Verardo R."/>
            <person name="Wei C.L."/>
            <person name="Yagi K."/>
            <person name="Yamanishi H."/>
            <person name="Zabarovsky E."/>
            <person name="Zhu S."/>
            <person name="Zimmer A."/>
            <person name="Hide W."/>
            <person name="Bult C."/>
            <person name="Grimmond S.M."/>
            <person name="Teasdale R.D."/>
            <person name="Liu E.T."/>
            <person name="Brusic V."/>
            <person name="Quackenbush J."/>
            <person name="Wahlestedt C."/>
            <person name="Mattick J.S."/>
            <person name="Hume D.A."/>
            <person name="Kai C."/>
            <person name="Sasaki D."/>
            <person name="Tomaru Y."/>
            <person name="Fukuda S."/>
            <person name="Kanamori-Katayama M."/>
            <person name="Suzuki M."/>
            <person name="Aoki J."/>
            <person name="Arakawa T."/>
            <person name="Iida J."/>
            <person name="Imamura K."/>
            <person name="Itoh M."/>
            <person name="Kato T."/>
            <person name="Kawaji H."/>
            <person name="Kawagashira N."/>
            <person name="Kawashima T."/>
            <person name="Kojima M."/>
            <person name="Kondo S."/>
            <person name="Konno H."/>
            <person name="Nakano K."/>
            <person name="Ninomiya N."/>
            <person name="Nishio T."/>
            <person name="Okada M."/>
            <person name="Plessy C."/>
            <person name="Shibata K."/>
            <person name="Shiraki T."/>
            <person name="Suzuki S."/>
            <person name="Tagami M."/>
            <person name="Waki K."/>
            <person name="Watahiki A."/>
            <person name="Okamura-Oho Y."/>
            <person name="Suzuki H."/>
            <person name="Kawai J."/>
            <person name="Hayashizaki Y."/>
        </authorList>
    </citation>
    <scope>NUCLEOTIDE SEQUENCE [LARGE SCALE MRNA]</scope>
    <source>
        <strain>C57BL/6J</strain>
        <tissue>Corpora quadrigemina</tissue>
        <tissue>Skin</tissue>
    </source>
</reference>
<reference key="4">
    <citation type="journal article" date="2004" name="Genome Res.">
        <title>The status, quality, and expansion of the NIH full-length cDNA project: the Mammalian Gene Collection (MGC).</title>
        <authorList>
            <consortium name="The MGC Project Team"/>
        </authorList>
    </citation>
    <scope>NUCLEOTIDE SEQUENCE [LARGE SCALE MRNA]</scope>
    <source>
        <strain>FVB/N</strain>
        <tissue>Kidney</tissue>
    </source>
</reference>
<reference key="5">
    <citation type="journal article" date="2010" name="Cell">
        <title>A tissue-specific atlas of mouse protein phosphorylation and expression.</title>
        <authorList>
            <person name="Huttlin E.L."/>
            <person name="Jedrychowski M.P."/>
            <person name="Elias J.E."/>
            <person name="Goswami T."/>
            <person name="Rad R."/>
            <person name="Beausoleil S.A."/>
            <person name="Villen J."/>
            <person name="Haas W."/>
            <person name="Sowa M.E."/>
            <person name="Gygi S.P."/>
        </authorList>
    </citation>
    <scope>IDENTIFICATION BY MASS SPECTROMETRY [LARGE SCALE ANALYSIS]</scope>
    <source>
        <tissue>Kidney</tissue>
    </source>
</reference>
<comment type="function">
    <text evidence="1">Actin-binding protein that promotes actin bundling. May neither bind calcium nor depend on calcium for function (By similarity).</text>
</comment>
<comment type="subunit">
    <text evidence="1 5">Homodimer (Potential). Monomer (By similarity).</text>
</comment>
<comment type="subcellular location">
    <subcellularLocation>
        <location evidence="1">Cytoplasm</location>
        <location evidence="1">Cytoskeleton</location>
    </subcellularLocation>
    <subcellularLocation>
        <location evidence="1">Cell projection</location>
        <location evidence="1">Ruffle membrane</location>
        <topology evidence="1">Peripheral membrane protein</topology>
        <orientation evidence="1">Cytoplasmic side</orientation>
    </subcellularLocation>
    <text evidence="1">Colocalizes with F-actin. Partially relocates to membrane ruffles in response to invading bacteria (By similarity).</text>
</comment>
<accession>Q9EQX4</accession>
<accession>Q8C150</accession>
<sequence>MSVALSNRFQGGKAFGLLKARQEKRLEEINREFLCDQKYSDEENLPEKLAAFKEKYMEFDLNNEGEIDLMSLKRMMEKLGVPKTHLEMKKMISEVTGGVSDTISYRDFVNMMLGKRSAVLKLVMMFEGKANESSPKPAGPPPERDIASLP</sequence>
<gene>
    <name type="primary">Aif1l</name>
    <name type="synonym">Iba2</name>
</gene>
<protein>
    <recommendedName>
        <fullName>Allograft inflammatory factor 1-like</fullName>
    </recommendedName>
    <alternativeName>
        <fullName>Ionized calcium-binding adapter molecule 2</fullName>
    </alternativeName>
</protein>